<keyword id="KW-1003">Cell membrane</keyword>
<keyword id="KW-0418">Kinase</keyword>
<keyword id="KW-0472">Membrane</keyword>
<keyword id="KW-0598">Phosphotransferase system</keyword>
<keyword id="KW-1185">Reference proteome</keyword>
<keyword id="KW-0762">Sugar transport</keyword>
<keyword id="KW-0808">Transferase</keyword>
<keyword id="KW-0812">Transmembrane</keyword>
<keyword id="KW-1133">Transmembrane helix</keyword>
<keyword id="KW-0813">Transport</keyword>
<reference key="1">
    <citation type="journal article" date="2005" name="Proc. Natl. Acad. Sci. U.S.A.">
        <title>Whole genome sequence of Staphylococcus saprophyticus reveals the pathogenesis of uncomplicated urinary tract infection.</title>
        <authorList>
            <person name="Kuroda M."/>
            <person name="Yamashita A."/>
            <person name="Hirakawa H."/>
            <person name="Kumano M."/>
            <person name="Morikawa K."/>
            <person name="Higashide M."/>
            <person name="Maruyama A."/>
            <person name="Inose Y."/>
            <person name="Matoba K."/>
            <person name="Toh H."/>
            <person name="Kuhara S."/>
            <person name="Hattori M."/>
            <person name="Ohta T."/>
        </authorList>
    </citation>
    <scope>NUCLEOTIDE SEQUENCE [LARGE SCALE GENOMIC DNA]</scope>
    <source>
        <strain>ATCC 15305 / DSM 20229 / NCIMB 8711 / NCTC 7292 / S-41</strain>
    </source>
</reference>
<evidence type="ECO:0000250" key="1">
    <source>
        <dbReference type="UniProtKB" id="Q57071"/>
    </source>
</evidence>
<evidence type="ECO:0000255" key="2">
    <source>
        <dbReference type="PROSITE-ProRule" id="PRU00416"/>
    </source>
</evidence>
<evidence type="ECO:0000255" key="3">
    <source>
        <dbReference type="PROSITE-ProRule" id="PRU00421"/>
    </source>
</evidence>
<evidence type="ECO:0000255" key="4">
    <source>
        <dbReference type="PROSITE-ProRule" id="PRU00426"/>
    </source>
</evidence>
<evidence type="ECO:0000305" key="5"/>
<protein>
    <recommendedName>
        <fullName evidence="1">PTS system glucose-specific EIICBA component</fullName>
        <ecNumber evidence="1">2.7.1.199</ecNumber>
    </recommendedName>
    <alternativeName>
        <fullName evidence="1">EIICBA-Glc</fullName>
        <shortName evidence="1">EII-Glc</shortName>
    </alternativeName>
    <alternativeName>
        <fullName evidence="5">EIICBA-Glc 1</fullName>
    </alternativeName>
    <domain>
        <recommendedName>
            <fullName evidence="1">Glucose permease IIC component</fullName>
        </recommendedName>
        <alternativeName>
            <fullName evidence="1">PTS system glucose-specific EIIC component</fullName>
        </alternativeName>
    </domain>
    <domain>
        <recommendedName>
            <fullName evidence="1">Glucose-specific phosphotransferase enzyme IIB component</fullName>
        </recommendedName>
        <alternativeName>
            <fullName evidence="1">PTS system glucose-specific EIIB component</fullName>
        </alternativeName>
    </domain>
    <domain>
        <recommendedName>
            <fullName evidence="1">Glucose-specific phosphotransferase enzyme IIA component</fullName>
        </recommendedName>
        <alternativeName>
            <fullName evidence="1">PTS system glucose-specific EIIA component</fullName>
        </alternativeName>
    </domain>
</protein>
<organism>
    <name type="scientific">Staphylococcus saprophyticus subsp. saprophyticus (strain ATCC 15305 / DSM 20229 / NCIMB 8711 / NCTC 7292 / S-41)</name>
    <dbReference type="NCBI Taxonomy" id="342451"/>
    <lineage>
        <taxon>Bacteria</taxon>
        <taxon>Bacillati</taxon>
        <taxon>Bacillota</taxon>
        <taxon>Bacilli</taxon>
        <taxon>Bacillales</taxon>
        <taxon>Staphylococcaceae</taxon>
        <taxon>Staphylococcus</taxon>
    </lineage>
</organism>
<feature type="chain" id="PRO_0000351406" description="PTS system glucose-specific EIICBA component">
    <location>
        <begin position="1"/>
        <end position="678"/>
    </location>
</feature>
<feature type="transmembrane region" description="Helical" evidence="4">
    <location>
        <begin position="16"/>
        <end position="36"/>
    </location>
</feature>
<feature type="transmembrane region" description="Helical" evidence="4">
    <location>
        <begin position="63"/>
        <end position="83"/>
    </location>
</feature>
<feature type="transmembrane region" description="Helical" evidence="4">
    <location>
        <begin position="89"/>
        <end position="109"/>
    </location>
</feature>
<feature type="transmembrane region" description="Helical" evidence="4">
    <location>
        <begin position="126"/>
        <end position="146"/>
    </location>
</feature>
<feature type="transmembrane region" description="Helical" evidence="4">
    <location>
        <begin position="170"/>
        <end position="190"/>
    </location>
</feature>
<feature type="transmembrane region" description="Helical" evidence="4">
    <location>
        <begin position="211"/>
        <end position="231"/>
    </location>
</feature>
<feature type="transmembrane region" description="Helical" evidence="4">
    <location>
        <begin position="273"/>
        <end position="293"/>
    </location>
</feature>
<feature type="transmembrane region" description="Helical" evidence="4">
    <location>
        <begin position="303"/>
        <end position="323"/>
    </location>
</feature>
<feature type="transmembrane region" description="Helical" evidence="4">
    <location>
        <begin position="329"/>
        <end position="349"/>
    </location>
</feature>
<feature type="transmembrane region" description="Helical" evidence="4">
    <location>
        <begin position="355"/>
        <end position="375"/>
    </location>
</feature>
<feature type="transmembrane region" description="Helical" evidence="4">
    <location>
        <begin position="382"/>
        <end position="402"/>
    </location>
</feature>
<feature type="domain" description="PTS EIIC type-1" evidence="4">
    <location>
        <begin position="3"/>
        <end position="414"/>
    </location>
</feature>
<feature type="domain" description="PTS EIIB type-1" evidence="3">
    <location>
        <begin position="425"/>
        <end position="506"/>
    </location>
</feature>
<feature type="domain" description="PTS EIIA type-1" evidence="2">
    <location>
        <begin position="547"/>
        <end position="651"/>
    </location>
</feature>
<feature type="active site" description="Phosphocysteine intermediate; for EIIB activity" evidence="3">
    <location>
        <position position="447"/>
    </location>
</feature>
<feature type="active site" description="Tele-phosphohistidine intermediate; for EIIA activity" evidence="2">
    <location>
        <position position="599"/>
    </location>
</feature>
<feature type="sequence conflict" description="In Ref. 1; BAE17481." evidence="5" ref="1">
    <original>M</original>
    <variation>S</variation>
    <location>
        <position position="1"/>
    </location>
</feature>
<gene>
    <name type="primary">ptsG</name>
    <name type="ordered locus">SSP0336</name>
</gene>
<accession>Q4A0C4</accession>
<dbReference type="EC" id="2.7.1.199" evidence="1"/>
<dbReference type="EMBL" id="AP008934">
    <property type="protein sequence ID" value="BAE17481.1"/>
    <property type="status" value="ALT_INIT"/>
    <property type="molecule type" value="Genomic_DNA"/>
</dbReference>
<dbReference type="RefSeq" id="WP_011302315.1">
    <property type="nucleotide sequence ID" value="NC_007350.1"/>
</dbReference>
<dbReference type="SMR" id="Q4A0C4"/>
<dbReference type="GeneID" id="3615791"/>
<dbReference type="KEGG" id="ssp:SSP0336"/>
<dbReference type="PATRIC" id="fig|342451.11.peg.340"/>
<dbReference type="eggNOG" id="COG1263">
    <property type="taxonomic scope" value="Bacteria"/>
</dbReference>
<dbReference type="eggNOG" id="COG1264">
    <property type="taxonomic scope" value="Bacteria"/>
</dbReference>
<dbReference type="eggNOG" id="COG2190">
    <property type="taxonomic scope" value="Bacteria"/>
</dbReference>
<dbReference type="HOGENOM" id="CLU_012312_1_1_9"/>
<dbReference type="Proteomes" id="UP000006371">
    <property type="component" value="Chromosome"/>
</dbReference>
<dbReference type="GO" id="GO:0005886">
    <property type="term" value="C:plasma membrane"/>
    <property type="evidence" value="ECO:0007669"/>
    <property type="project" value="UniProtKB-SubCell"/>
</dbReference>
<dbReference type="GO" id="GO:0055056">
    <property type="term" value="F:D-glucose transmembrane transporter activity"/>
    <property type="evidence" value="ECO:0007669"/>
    <property type="project" value="InterPro"/>
</dbReference>
<dbReference type="GO" id="GO:0016301">
    <property type="term" value="F:kinase activity"/>
    <property type="evidence" value="ECO:0007669"/>
    <property type="project" value="UniProtKB-KW"/>
</dbReference>
<dbReference type="GO" id="GO:0008982">
    <property type="term" value="F:protein-N(PI)-phosphohistidine-sugar phosphotransferase activity"/>
    <property type="evidence" value="ECO:0007669"/>
    <property type="project" value="InterPro"/>
</dbReference>
<dbReference type="GO" id="GO:0090563">
    <property type="term" value="F:protein-phosphocysteine-sugar phosphotransferase activity"/>
    <property type="evidence" value="ECO:0007669"/>
    <property type="project" value="TreeGrafter"/>
</dbReference>
<dbReference type="GO" id="GO:1904659">
    <property type="term" value="P:D-glucose transmembrane transport"/>
    <property type="evidence" value="ECO:0007669"/>
    <property type="project" value="InterPro"/>
</dbReference>
<dbReference type="GO" id="GO:0009401">
    <property type="term" value="P:phosphoenolpyruvate-dependent sugar phosphotransferase system"/>
    <property type="evidence" value="ECO:0007669"/>
    <property type="project" value="UniProtKB-KW"/>
</dbReference>
<dbReference type="CDD" id="cd00210">
    <property type="entry name" value="PTS_IIA_glc"/>
    <property type="match status" value="1"/>
</dbReference>
<dbReference type="CDD" id="cd00212">
    <property type="entry name" value="PTS_IIB_glc"/>
    <property type="match status" value="1"/>
</dbReference>
<dbReference type="FunFam" id="2.70.70.10:FF:000001">
    <property type="entry name" value="PTS system glucose-specific IIA component"/>
    <property type="match status" value="1"/>
</dbReference>
<dbReference type="FunFam" id="3.30.1360.60:FF:000001">
    <property type="entry name" value="PTS system glucose-specific IIBC component PtsG"/>
    <property type="match status" value="1"/>
</dbReference>
<dbReference type="Gene3D" id="2.70.70.10">
    <property type="entry name" value="Glucose Permease (Domain IIA)"/>
    <property type="match status" value="1"/>
</dbReference>
<dbReference type="Gene3D" id="3.30.1360.60">
    <property type="entry name" value="Glucose permease domain IIB"/>
    <property type="match status" value="1"/>
</dbReference>
<dbReference type="InterPro" id="IPR011055">
    <property type="entry name" value="Dup_hybrid_motif"/>
</dbReference>
<dbReference type="InterPro" id="IPR036878">
    <property type="entry name" value="Glu_permease_IIB"/>
</dbReference>
<dbReference type="InterPro" id="IPR018113">
    <property type="entry name" value="PTrfase_EIIB_Cys"/>
</dbReference>
<dbReference type="InterPro" id="IPR001127">
    <property type="entry name" value="PTS_EIIA_1_perm"/>
</dbReference>
<dbReference type="InterPro" id="IPR003352">
    <property type="entry name" value="PTS_EIIC"/>
</dbReference>
<dbReference type="InterPro" id="IPR013013">
    <property type="entry name" value="PTS_EIIC_1"/>
</dbReference>
<dbReference type="InterPro" id="IPR050429">
    <property type="entry name" value="PTS_Glucose_EIICBA"/>
</dbReference>
<dbReference type="InterPro" id="IPR001996">
    <property type="entry name" value="PTS_IIB_1"/>
</dbReference>
<dbReference type="InterPro" id="IPR011299">
    <property type="entry name" value="PTS_IIBC_glc"/>
</dbReference>
<dbReference type="NCBIfam" id="TIGR00826">
    <property type="entry name" value="EIIB_glc"/>
    <property type="match status" value="1"/>
</dbReference>
<dbReference type="NCBIfam" id="TIGR00830">
    <property type="entry name" value="PTBA"/>
    <property type="match status" value="1"/>
</dbReference>
<dbReference type="NCBIfam" id="TIGR02002">
    <property type="entry name" value="PTS-II-BC-glcB"/>
    <property type="match status" value="1"/>
</dbReference>
<dbReference type="PANTHER" id="PTHR30009">
    <property type="entry name" value="CYTOCHROME C-TYPE SYNTHESIS PROTEIN AND PTS TRANSMEMBRANE COMPONENT"/>
    <property type="match status" value="1"/>
</dbReference>
<dbReference type="PANTHER" id="PTHR30009:SF20">
    <property type="entry name" value="PTS SYSTEM GLUCOSE-SPECIFIC EIICB COMPONENT-RELATED"/>
    <property type="match status" value="1"/>
</dbReference>
<dbReference type="Pfam" id="PF00358">
    <property type="entry name" value="PTS_EIIA_1"/>
    <property type="match status" value="1"/>
</dbReference>
<dbReference type="Pfam" id="PF00367">
    <property type="entry name" value="PTS_EIIB"/>
    <property type="match status" value="1"/>
</dbReference>
<dbReference type="Pfam" id="PF02378">
    <property type="entry name" value="PTS_EIIC"/>
    <property type="match status" value="1"/>
</dbReference>
<dbReference type="SUPFAM" id="SSF51261">
    <property type="entry name" value="Duplicated hybrid motif"/>
    <property type="match status" value="1"/>
</dbReference>
<dbReference type="SUPFAM" id="SSF55604">
    <property type="entry name" value="Glucose permease domain IIB"/>
    <property type="match status" value="1"/>
</dbReference>
<dbReference type="PROSITE" id="PS51093">
    <property type="entry name" value="PTS_EIIA_TYPE_1"/>
    <property type="match status" value="1"/>
</dbReference>
<dbReference type="PROSITE" id="PS00371">
    <property type="entry name" value="PTS_EIIA_TYPE_1_HIS"/>
    <property type="match status" value="1"/>
</dbReference>
<dbReference type="PROSITE" id="PS51098">
    <property type="entry name" value="PTS_EIIB_TYPE_1"/>
    <property type="match status" value="1"/>
</dbReference>
<dbReference type="PROSITE" id="PS01035">
    <property type="entry name" value="PTS_EIIB_TYPE_1_CYS"/>
    <property type="match status" value="1"/>
</dbReference>
<dbReference type="PROSITE" id="PS51103">
    <property type="entry name" value="PTS_EIIC_TYPE_1"/>
    <property type="match status" value="1"/>
</dbReference>
<proteinExistence type="inferred from homology"/>
<sequence length="678" mass="73829">MFKKLFGQLQRIGKALMLPVAILPAAGLLLAIGTAMQGESLQHYLPFIQNGGIQSVAEMMTGAGGIIFDNLPMIFAMGVAIGLASGDGVAAIAAFVGYLVMNKTMGAFLHVSPDNVNDAASGYASVLGIPTLQTGVFGGIIIGALAAWCYNKFYNISLPSYLGFFAGKRFVPIMMATTSFILAFPMAWIWPSIQTGLNAFSEGLLDSNTGLAVFLFGFIKRLLIPFGLHHIFHAPFWFEFGAWKNAAGEMIHGDQRIFIEQIREGSKLTAGKFMQGEFPVMMFGLPAAALAIYHTAKPENKKVVAGLMGSAALTSFLTGITEPLEFSFLFVAPVLFFVHAILDGLSFLILYLLNVHLGYTFSGGFIDYVLLGVLPNKTQWWLVIPVGVVYAFIYYFVFRFLILKFKYKTPGREDKQAQFTNSSASELPFNVLKAMGGEENIKHLDACITRLRVEVKEKGKVDVAGLKALGASGVLEVGNNMQAIFGPKSDQIKHDMSLIMKGEITKPQETTVTEEESEEVVHIERASEVNIYAPGNGQVIPLSEVPDQVFAQKMMGDGVGFIPADGKIVAPFDGTVKTIFPTKHAIGLESDQGLELLIHIGIDTVKLNGEGFESFVETDDRVHKGQVLMQIDLDYITAHAPSTVTPLIITNLEDRQLSVEDVKDVTAEQLIIKVIDDK</sequence>
<name>PTG3C_STAS1</name>
<comment type="function">
    <text evidence="1">The phosphoenolpyruvate-dependent sugar phosphotransferase system (sugar PTS), a major carbohydrate active transport system, catalyzes the phosphorylation of incoming sugar substrates concomitantly with their translocation across the cell membrane. This system is involved in glucose transport.</text>
</comment>
<comment type="catalytic activity">
    <reaction evidence="1">
        <text>N(pros)-phospho-L-histidyl-[protein] + D-glucose(out) = D-glucose 6-phosphate(in) + L-histidyl-[protein]</text>
        <dbReference type="Rhea" id="RHEA:33367"/>
        <dbReference type="Rhea" id="RHEA-COMP:9745"/>
        <dbReference type="Rhea" id="RHEA-COMP:9746"/>
        <dbReference type="ChEBI" id="CHEBI:4167"/>
        <dbReference type="ChEBI" id="CHEBI:29979"/>
        <dbReference type="ChEBI" id="CHEBI:61548"/>
        <dbReference type="ChEBI" id="CHEBI:64837"/>
        <dbReference type="EC" id="2.7.1.199"/>
    </reaction>
</comment>
<comment type="subcellular location">
    <subcellularLocation>
        <location evidence="4">Cell membrane</location>
        <topology evidence="4">Multi-pass membrane protein</topology>
    </subcellularLocation>
</comment>
<comment type="domain">
    <text evidence="4">The EIIC domain forms the PTS system translocation channel and contains the specific substrate-binding site.</text>
</comment>
<comment type="domain">
    <text evidence="3">The EIIB domain is phosphorylated by phospho-EIIA on a cysteinyl or histidyl residue, depending on the transported sugar. Then, it transfers the phosphoryl group to the sugar substrate concomitantly with the sugar uptake processed by the EIIC domain.</text>
</comment>
<comment type="domain">
    <text evidence="2">The EIIA domain is phosphorylated by phospho-HPr on a histidyl residue. Then, it transfers the phosphoryl group to the EIIB domain.</text>
</comment>
<comment type="sequence caution" evidence="5">
    <conflict type="erroneous initiation">
        <sequence resource="EMBL-CDS" id="BAE17481"/>
    </conflict>
</comment>